<accession>O81283</accession>
<accession>O22774</accession>
<accession>Q56W83</accession>
<accession>Q945M4</accession>
<proteinExistence type="evidence at protein level"/>
<organism>
    <name type="scientific">Arabidopsis thaliana</name>
    <name type="common">Mouse-ear cress</name>
    <dbReference type="NCBI Taxonomy" id="3702"/>
    <lineage>
        <taxon>Eukaryota</taxon>
        <taxon>Viridiplantae</taxon>
        <taxon>Streptophyta</taxon>
        <taxon>Embryophyta</taxon>
        <taxon>Tracheophyta</taxon>
        <taxon>Spermatophyta</taxon>
        <taxon>Magnoliopsida</taxon>
        <taxon>eudicotyledons</taxon>
        <taxon>Gunneridae</taxon>
        <taxon>Pentapetalae</taxon>
        <taxon>rosids</taxon>
        <taxon>malvids</taxon>
        <taxon>Brassicales</taxon>
        <taxon>Brassicaceae</taxon>
        <taxon>Camelineae</taxon>
        <taxon>Arabidopsis</taxon>
    </lineage>
</organism>
<sequence>MDSKSVTPEPTNPFYASSGQSGKTYASVVAAAAAAAADKEDGGAVSSAKELDSSSEAVSGNSDKVGADDLSDSEKEKPNLVGDGKVSDEVDGSLKEDSTTPEATPKPEVVSGETIGVDDVSSLSPKPEAVSDGVGVVEENKKVKEDVEDIKDDGESKIENGSVDVDVKQASTDGESESKVKDVEEEDVGTKKDDEGESELGGKVDVDDKSDNVIEEEGVELTDKGDVIVNSSPVESVHVDVAKPGVVVVGDAEGSEELKINADAETLEVANKFDQIGDDDSGEFEPVSDKAIEEVEEKFTSESDSIADSSKLESVDTSAVEPEVVAAESGSEPKDVEKANGLEKGMTYAEVIKAASAVADNGTKEEESVLGGIVDDAEEGVKLNNKGDFVVDSSAIEAVNVDVAKPGVVVVGDVEVSEVLETDGNIPDVHNKFDPIGQGEGGEVELESDKATEEGGGKLVSEGDSMVDSSVVDSVDADINVAEPGVVVVGAAKEAVIKEDDKDDEVDKTISNIEEPDDLTAAYDGNFELAVKEISEAAKVEPDEPKVGVEVEELPVSESLKVGSVDAEEDSIPAAESQFEVRKVVEGDSAEEDENKLPVEDIVSSREFSFGGKEVDQEPSGEGVTRVDGSESEEETEEMIFGSSEAAKQFLAELEKASSGIEAHSDEANISNNMSDRIDGQIVTDSDEDVDTEDEGEEKMFDTAALAALLKAATGGGSSEGGNFTITSQDGTKLFSMDRPAGLSSSLRPLKPAAAPRANRSNIFSNSNVTMADETEINLSEEEKQKLEKLQSLRVKFLRLLQRLGHSAEDSIAAQVLYRLALLAGRQAGQLFSLDAAKKKAVESEAEGNEELIFSLNILVLGKAGVGKSATINSILGNQIASIDAFGLSTTSVREISGTVNGVKITFIDTPGLKSAAMDQSTNAKMLSSVKKVMKKCPPDIVLYVDRLDTQTRDLNNLPLLRTITASLGTSIWKNAIVTLTHAASAPPDGPSGTPLSYDVFVAQCSHIVQQSIGQAVGDLRLMNPSLMNPVSLVENHPLCRKNREGVKVLPNGQTWRSQLLLLCYSLKVLSETNSLLRPQEPLDHRKVFGFRVRSPPLPYLLSWLLQSRAHPKLPGDQGGDSVDSDIEIDDVSDSEQEDGEDDEYDQLPPFKPLRKTQLAKLSNEQRKAYFEEYDYRVKLLQKKQWREELKRMKEMKKNGKKLGESEFGYPGEEDDPENGAPAAVPVPLPDMVLPPSFDSDNSAYRYRYLEPTSQLLTRPVLDTHGWDHDCGYDGVNAEHSLALASRFPATATVQVTKDKKEFNIHLDSSVSAKHGENGSTMAGFDIQNVGKQLAYVVRGETKFKNLRKNKTTVGGSVTFLGENIATGVKLEDQIALGKRLVLVGSTGTMRSQGDSAYGANLEVRLREADFPIGQDQSSFGLSLVKWRGDLALGANLQSQVSVGRNSKIALRAGLNNKMSGQITVRTSSSDQLQIALTAILPIAMSIYKSIRPEATNDKYSMY</sequence>
<gene>
    <name evidence="17 18 19 20" type="primary">TOC159</name>
    <name type="synonym">PPI2</name>
    <name type="synonym">TOC160</name>
    <name evidence="17" type="synonym">TOC86</name>
    <name evidence="23" type="ordered locus">At4g02510</name>
    <name evidence="25" type="ORF">T10P11.19</name>
    <name evidence="24" type="ORF">T14P8.24</name>
</gene>
<keyword id="KW-0150">Chloroplast</keyword>
<keyword id="KW-0175">Coiled coil</keyword>
<keyword id="KW-0963">Cytoplasm</keyword>
<keyword id="KW-0342">GTP-binding</keyword>
<keyword id="KW-0378">Hydrolase</keyword>
<keyword id="KW-0460">Magnesium</keyword>
<keyword id="KW-0472">Membrane</keyword>
<keyword id="KW-0479">Metal-binding</keyword>
<keyword id="KW-0547">Nucleotide-binding</keyword>
<keyword id="KW-0597">Phosphoprotein</keyword>
<keyword id="KW-0934">Plastid</keyword>
<keyword id="KW-1002">Plastid outer membrane</keyword>
<keyword id="KW-0653">Protein transport</keyword>
<keyword id="KW-0675">Receptor</keyword>
<keyword id="KW-1185">Reference proteome</keyword>
<keyword id="KW-0812">Transmembrane</keyword>
<keyword id="KW-1133">Transmembrane helix</keyword>
<keyword id="KW-0813">Transport</keyword>
<name>TC159_ARATH</name>
<dbReference type="EC" id="3.6.5.-" evidence="7 10"/>
<dbReference type="EMBL" id="AC002330">
    <property type="protein sequence ID" value="AAC78265.2"/>
    <property type="status" value="ALT_SEQ"/>
    <property type="molecule type" value="Genomic_DNA"/>
</dbReference>
<dbReference type="EMBL" id="AF069298">
    <property type="protein sequence ID" value="AAC19285.1"/>
    <property type="molecule type" value="Genomic_DNA"/>
</dbReference>
<dbReference type="EMBL" id="AL161494">
    <property type="protein sequence ID" value="CAB80744.1"/>
    <property type="status" value="ALT_SEQ"/>
    <property type="molecule type" value="Genomic_DNA"/>
</dbReference>
<dbReference type="EMBL" id="CP002687">
    <property type="protein sequence ID" value="AEE82182.1"/>
    <property type="molecule type" value="Genomic_DNA"/>
</dbReference>
<dbReference type="EMBL" id="CP002687">
    <property type="protein sequence ID" value="ANM66758.1"/>
    <property type="molecule type" value="Genomic_DNA"/>
</dbReference>
<dbReference type="EMBL" id="CP002687">
    <property type="protein sequence ID" value="ANM66759.1"/>
    <property type="molecule type" value="Genomic_DNA"/>
</dbReference>
<dbReference type="EMBL" id="CP002687">
    <property type="protein sequence ID" value="ANM66760.1"/>
    <property type="molecule type" value="Genomic_DNA"/>
</dbReference>
<dbReference type="EMBL" id="AF412063">
    <property type="protein sequence ID" value="AAL06516.1"/>
    <property type="status" value="ALT_INIT"/>
    <property type="molecule type" value="mRNA"/>
</dbReference>
<dbReference type="EMBL" id="AY133653">
    <property type="protein sequence ID" value="AAM91483.1"/>
    <property type="molecule type" value="mRNA"/>
</dbReference>
<dbReference type="EMBL" id="AK222164">
    <property type="protein sequence ID" value="BAD95269.1"/>
    <property type="molecule type" value="mRNA"/>
</dbReference>
<dbReference type="PIR" id="A85032">
    <property type="entry name" value="A85032"/>
</dbReference>
<dbReference type="PIR" id="T01098">
    <property type="entry name" value="T01098"/>
</dbReference>
<dbReference type="RefSeq" id="NP_001319848.1">
    <property type="nucleotide sequence ID" value="NM_001340383.1"/>
</dbReference>
<dbReference type="RefSeq" id="NP_001328635.1">
    <property type="nucleotide sequence ID" value="NM_001340385.1"/>
</dbReference>
<dbReference type="RefSeq" id="NP_001328636.1">
    <property type="nucleotide sequence ID" value="NM_001340384.1"/>
</dbReference>
<dbReference type="RefSeq" id="NP_567242.2">
    <property type="nucleotide sequence ID" value="NM_116485.4"/>
</dbReference>
<dbReference type="SMR" id="O81283"/>
<dbReference type="BioGRID" id="13225">
    <property type="interactions" value="53"/>
</dbReference>
<dbReference type="FunCoup" id="O81283">
    <property type="interactions" value="1913"/>
</dbReference>
<dbReference type="IntAct" id="O81283">
    <property type="interactions" value="15"/>
</dbReference>
<dbReference type="MINT" id="O81283"/>
<dbReference type="STRING" id="3702.O81283"/>
<dbReference type="iPTMnet" id="O81283"/>
<dbReference type="MetOSite" id="O81283"/>
<dbReference type="SwissPalm" id="O81283"/>
<dbReference type="PaxDb" id="3702-AT4G02510.1"/>
<dbReference type="ProteomicsDB" id="234226"/>
<dbReference type="EnsemblPlants" id="AT4G02510.1">
    <property type="protein sequence ID" value="AT4G02510.1"/>
    <property type="gene ID" value="AT4G02510"/>
</dbReference>
<dbReference type="EnsemblPlants" id="AT4G02510.2">
    <property type="protein sequence ID" value="AT4G02510.2"/>
    <property type="gene ID" value="AT4G02510"/>
</dbReference>
<dbReference type="EnsemblPlants" id="AT4G02510.3">
    <property type="protein sequence ID" value="AT4G02510.3"/>
    <property type="gene ID" value="AT4G02510"/>
</dbReference>
<dbReference type="EnsemblPlants" id="AT4G02510.4">
    <property type="protein sequence ID" value="AT4G02510.4"/>
    <property type="gene ID" value="AT4G02510"/>
</dbReference>
<dbReference type="GeneID" id="827934"/>
<dbReference type="Gramene" id="AT4G02510.1">
    <property type="protein sequence ID" value="AT4G02510.1"/>
    <property type="gene ID" value="AT4G02510"/>
</dbReference>
<dbReference type="Gramene" id="AT4G02510.2">
    <property type="protein sequence ID" value="AT4G02510.2"/>
    <property type="gene ID" value="AT4G02510"/>
</dbReference>
<dbReference type="Gramene" id="AT4G02510.3">
    <property type="protein sequence ID" value="AT4G02510.3"/>
    <property type="gene ID" value="AT4G02510"/>
</dbReference>
<dbReference type="Gramene" id="AT4G02510.4">
    <property type="protein sequence ID" value="AT4G02510.4"/>
    <property type="gene ID" value="AT4G02510"/>
</dbReference>
<dbReference type="KEGG" id="ath:AT4G02510"/>
<dbReference type="Araport" id="AT4G02510"/>
<dbReference type="TAIR" id="AT4G02510">
    <property type="gene designation" value="TOC159"/>
</dbReference>
<dbReference type="eggNOG" id="ENOG502QR60">
    <property type="taxonomic scope" value="Eukaryota"/>
</dbReference>
<dbReference type="HOGENOM" id="CLU_003856_1_0_1"/>
<dbReference type="InParanoid" id="O81283"/>
<dbReference type="OMA" id="GTSIWKN"/>
<dbReference type="PhylomeDB" id="O81283"/>
<dbReference type="CD-CODE" id="4299E36E">
    <property type="entry name" value="Nucleolus"/>
</dbReference>
<dbReference type="PRO" id="PR:O81283"/>
<dbReference type="Proteomes" id="UP000006548">
    <property type="component" value="Chromosome 4"/>
</dbReference>
<dbReference type="ExpressionAtlas" id="O81283">
    <property type="expression patterns" value="baseline and differential"/>
</dbReference>
<dbReference type="GO" id="GO:0009507">
    <property type="term" value="C:chloroplast"/>
    <property type="evidence" value="ECO:0007005"/>
    <property type="project" value="TAIR"/>
</dbReference>
<dbReference type="GO" id="GO:0009941">
    <property type="term" value="C:chloroplast envelope"/>
    <property type="evidence" value="ECO:0007005"/>
    <property type="project" value="TAIR"/>
</dbReference>
<dbReference type="GO" id="GO:0009707">
    <property type="term" value="C:chloroplast outer membrane"/>
    <property type="evidence" value="ECO:0000314"/>
    <property type="project" value="TAIR"/>
</dbReference>
<dbReference type="GO" id="GO:0005829">
    <property type="term" value="C:cytosol"/>
    <property type="evidence" value="ECO:0007005"/>
    <property type="project" value="TAIR"/>
</dbReference>
<dbReference type="GO" id="GO:0009536">
    <property type="term" value="C:plastid"/>
    <property type="evidence" value="ECO:0007005"/>
    <property type="project" value="TAIR"/>
</dbReference>
<dbReference type="GO" id="GO:0061927">
    <property type="term" value="C:TOC-TIC supercomplex I"/>
    <property type="evidence" value="ECO:0000314"/>
    <property type="project" value="TAIR"/>
</dbReference>
<dbReference type="GO" id="GO:0004930">
    <property type="term" value="F:G protein-coupled receptor activity"/>
    <property type="evidence" value="ECO:0000314"/>
    <property type="project" value="TAIR"/>
</dbReference>
<dbReference type="GO" id="GO:0005525">
    <property type="term" value="F:GTP binding"/>
    <property type="evidence" value="ECO:0007669"/>
    <property type="project" value="UniProtKB-KW"/>
</dbReference>
<dbReference type="GO" id="GO:0003924">
    <property type="term" value="F:GTPase activity"/>
    <property type="evidence" value="ECO:0000304"/>
    <property type="project" value="TAIR"/>
</dbReference>
<dbReference type="GO" id="GO:0046872">
    <property type="term" value="F:metal ion binding"/>
    <property type="evidence" value="ECO:0007669"/>
    <property type="project" value="UniProtKB-KW"/>
</dbReference>
<dbReference type="GO" id="GO:0051087">
    <property type="term" value="F:protein-folding chaperone binding"/>
    <property type="evidence" value="ECO:0000353"/>
    <property type="project" value="CAFA"/>
</dbReference>
<dbReference type="GO" id="GO:0043024">
    <property type="term" value="F:ribosomal small subunit binding"/>
    <property type="evidence" value="ECO:0000353"/>
    <property type="project" value="CAFA"/>
</dbReference>
<dbReference type="GO" id="GO:0004888">
    <property type="term" value="F:transmembrane signaling receptor activity"/>
    <property type="evidence" value="ECO:0000314"/>
    <property type="project" value="TAIR"/>
</dbReference>
<dbReference type="GO" id="GO:0045037">
    <property type="term" value="P:protein import into chloroplast stroma"/>
    <property type="evidence" value="ECO:0000314"/>
    <property type="project" value="TAIR"/>
</dbReference>
<dbReference type="GO" id="GO:0045036">
    <property type="term" value="P:protein targeting to chloroplast"/>
    <property type="evidence" value="ECO:0000314"/>
    <property type="project" value="TAIR"/>
</dbReference>
<dbReference type="CDD" id="cd01853">
    <property type="entry name" value="Toc34_like"/>
    <property type="match status" value="1"/>
</dbReference>
<dbReference type="DisProt" id="DP00609"/>
<dbReference type="FunFam" id="3.40.50.300:FF:000413">
    <property type="entry name" value="Translocase of chloroplast 120, chloroplastic"/>
    <property type="match status" value="1"/>
</dbReference>
<dbReference type="Gene3D" id="3.40.50.300">
    <property type="entry name" value="P-loop containing nucleotide triphosphate hydrolases"/>
    <property type="match status" value="1"/>
</dbReference>
<dbReference type="InterPro" id="IPR006703">
    <property type="entry name" value="G_AIG1"/>
</dbReference>
<dbReference type="InterPro" id="IPR045058">
    <property type="entry name" value="GIMA/IAN/Toc"/>
</dbReference>
<dbReference type="InterPro" id="IPR027417">
    <property type="entry name" value="P-loop_NTPase"/>
</dbReference>
<dbReference type="InterPro" id="IPR024283">
    <property type="entry name" value="TOC159_MAD"/>
</dbReference>
<dbReference type="InterPro" id="IPR005690">
    <property type="entry name" value="Toc86_159"/>
</dbReference>
<dbReference type="NCBIfam" id="TIGR00993">
    <property type="entry name" value="3a0901s04IAP86"/>
    <property type="match status" value="1"/>
</dbReference>
<dbReference type="PANTHER" id="PTHR10903">
    <property type="entry name" value="GTPASE, IMAP FAMILY MEMBER-RELATED"/>
    <property type="match status" value="1"/>
</dbReference>
<dbReference type="PANTHER" id="PTHR10903:SF120">
    <property type="entry name" value="TRANSLOCASE OF CHLOROPLAST 159, CHLOROPLASTIC"/>
    <property type="match status" value="1"/>
</dbReference>
<dbReference type="Pfam" id="PF04548">
    <property type="entry name" value="AIG1"/>
    <property type="match status" value="1"/>
</dbReference>
<dbReference type="Pfam" id="PF11886">
    <property type="entry name" value="TOC159_MAD"/>
    <property type="match status" value="1"/>
</dbReference>
<dbReference type="SUPFAM" id="SSF52540">
    <property type="entry name" value="P-loop containing nucleoside triphosphate hydrolases"/>
    <property type="match status" value="1"/>
</dbReference>
<dbReference type="PROSITE" id="PS51720">
    <property type="entry name" value="G_AIG1"/>
    <property type="match status" value="1"/>
</dbReference>
<feature type="chain" id="PRO_0000352659" description="Translocase of chloroplast 159, chloroplastic">
    <location>
        <begin position="1"/>
        <end position="1503"/>
    </location>
</feature>
<feature type="transmembrane region" description="Helical" evidence="3">
    <location>
        <begin position="21"/>
        <end position="37"/>
    </location>
</feature>
<feature type="domain" description="AIG1-type G" evidence="4">
    <location>
        <begin position="853"/>
        <end position="1087"/>
    </location>
</feature>
<feature type="region of interest" description="Disordered" evidence="5">
    <location>
        <begin position="1"/>
        <end position="210"/>
    </location>
</feature>
<feature type="region of interest" description="Disordered" evidence="5">
    <location>
        <begin position="298"/>
        <end position="338"/>
    </location>
</feature>
<feature type="region of interest" description="Disordered" evidence="5">
    <location>
        <begin position="429"/>
        <end position="464"/>
    </location>
</feature>
<feature type="region of interest" description="Disordered" evidence="5">
    <location>
        <begin position="610"/>
        <end position="633"/>
    </location>
</feature>
<feature type="region of interest" description="G1" evidence="4">
    <location>
        <begin position="862"/>
        <end position="869"/>
    </location>
</feature>
<feature type="region of interest" description="Homodimerization" evidence="1">
    <location>
        <begin position="884"/>
        <end position="887"/>
    </location>
</feature>
<feature type="region of interest" description="G2" evidence="4">
    <location>
        <begin position="889"/>
        <end position="893"/>
    </location>
</feature>
<feature type="region of interest" description="G3" evidence="4">
    <location>
        <begin position="909"/>
        <end position="912"/>
    </location>
</feature>
<feature type="region of interest" description="Homodimerization" evidence="1">
    <location>
        <begin position="947"/>
        <end position="952"/>
    </location>
</feature>
<feature type="region of interest" description="G4" evidence="4">
    <location>
        <begin position="981"/>
        <end position="984"/>
    </location>
</feature>
<feature type="region of interest" description="G5" evidence="4">
    <location>
        <begin position="1035"/>
        <end position="1037"/>
    </location>
</feature>
<feature type="region of interest" description="Disordered" evidence="5">
    <location>
        <begin position="1203"/>
        <end position="1222"/>
    </location>
</feature>
<feature type="coiled-coil region" evidence="3">
    <location>
        <begin position="781"/>
        <end position="804"/>
    </location>
</feature>
<feature type="coiled-coil region" evidence="3">
    <location>
        <begin position="1175"/>
        <end position="1203"/>
    </location>
</feature>
<feature type="compositionally biased region" description="Polar residues" evidence="5">
    <location>
        <begin position="1"/>
        <end position="24"/>
    </location>
</feature>
<feature type="compositionally biased region" description="Basic and acidic residues" evidence="5">
    <location>
        <begin position="85"/>
        <end position="98"/>
    </location>
</feature>
<feature type="compositionally biased region" description="Basic and acidic residues" evidence="5">
    <location>
        <begin position="176"/>
        <end position="210"/>
    </location>
</feature>
<feature type="compositionally biased region" description="Basic and acidic residues" evidence="5">
    <location>
        <begin position="447"/>
        <end position="456"/>
    </location>
</feature>
<feature type="binding site" evidence="1">
    <location>
        <begin position="865"/>
        <end position="870"/>
    </location>
    <ligand>
        <name>GTP</name>
        <dbReference type="ChEBI" id="CHEBI:37565"/>
    </ligand>
</feature>
<feature type="binding site" evidence="1">
    <location>
        <position position="869"/>
    </location>
    <ligand>
        <name>Mg(2+)</name>
        <dbReference type="ChEBI" id="CHEBI:18420"/>
    </ligand>
</feature>
<feature type="binding site" evidence="1">
    <location>
        <begin position="884"/>
        <end position="889"/>
    </location>
    <ligand>
        <name>GTP</name>
        <dbReference type="ChEBI" id="CHEBI:37565"/>
    </ligand>
</feature>
<feature type="binding site" evidence="1">
    <location>
        <position position="982"/>
    </location>
    <ligand>
        <name>GTP</name>
        <dbReference type="ChEBI" id="CHEBI:37565"/>
    </ligand>
</feature>
<feature type="binding site" evidence="1">
    <location>
        <begin position="1035"/>
        <end position="1036"/>
    </location>
    <ligand>
        <name>GTP</name>
        <dbReference type="ChEBI" id="CHEBI:37565"/>
    </ligand>
</feature>
<feature type="modified residue" description="Phosphoserine" evidence="26 28">
    <location>
        <position position="71"/>
    </location>
</feature>
<feature type="modified residue" description="Phosphoserine" evidence="28">
    <location>
        <position position="210"/>
    </location>
</feature>
<feature type="modified residue" description="Phosphoserine" evidence="28">
    <location>
        <position position="281"/>
    </location>
</feature>
<feature type="modified residue" description="Phosphoserine" evidence="28">
    <location>
        <position position="288"/>
    </location>
</feature>
<feature type="modified residue" description="Phosphoserine" evidence="28">
    <location>
        <position position="448"/>
    </location>
</feature>
<feature type="modified residue" description="Phosphoserine" evidence="2">
    <location>
        <position position="461"/>
    </location>
</feature>
<feature type="modified residue" description="Phosphoserine" evidence="27 28">
    <location>
        <position position="589"/>
    </location>
</feature>
<feature type="modified residue" description="Phosphoserine" evidence="28">
    <location>
        <position position="609"/>
    </location>
</feature>
<feature type="modified residue" description="Phosphoserine" evidence="28">
    <location>
        <position position="630"/>
    </location>
</feature>
<feature type="modified residue" description="Phosphoserine" evidence="28">
    <location>
        <position position="632"/>
    </location>
</feature>
<feature type="modified residue" description="Phosphoserine" evidence="27">
    <location>
        <position position="665"/>
    </location>
</feature>
<feature type="mutagenesis site" description="Reduced GTPase activity and impaired chloroplast outer membrane anchoring." evidence="7">
    <original>A</original>
    <variation>R</variation>
    <location>
        <position position="864"/>
    </location>
</feature>
<feature type="mutagenesis site" description="Loss of GTPase activity and impaired chloroplast outer membrane anchoring." evidence="7 10">
    <original>K</original>
    <variation>R</variation>
    <location>
        <position position="868"/>
    </location>
</feature>
<feature type="sequence conflict" description="In Ref. 4; BAD95269." evidence="22" ref="4">
    <original>Q</original>
    <variation>L</variation>
    <location>
        <position position="815"/>
    </location>
</feature>
<feature type="sequence conflict" description="In Ref. 4; BAD95269." evidence="22" ref="4">
    <original>K</original>
    <variation>E</variation>
    <location>
        <position position="914"/>
    </location>
</feature>
<protein>
    <recommendedName>
        <fullName evidence="17 18">Translocase of chloroplast 159, chloroplastic</fullName>
        <shortName evidence="17 18">AtToc159</shortName>
        <ecNumber evidence="7 10">3.6.5.-</ecNumber>
    </recommendedName>
    <alternativeName>
        <fullName evidence="17">159 kDa chloroplast outer envelope protein</fullName>
    </alternativeName>
    <alternativeName>
        <fullName evidence="21">Plastid protein import 2</fullName>
    </alternativeName>
    <alternativeName>
        <fullName>Translocase of chloroplast 160, chloroplastic</fullName>
        <shortName>AtToc160</shortName>
    </alternativeName>
    <alternativeName>
        <fullName evidence="17">Translocase of chloroplast 86, chloroplastic</fullName>
        <shortName evidence="17">AtToc86</shortName>
    </alternativeName>
</protein>
<evidence type="ECO:0000250" key="1">
    <source>
        <dbReference type="UniProtKB" id="O23680"/>
    </source>
</evidence>
<evidence type="ECO:0000250" key="2">
    <source>
        <dbReference type="UniProtKB" id="Q9SLF3"/>
    </source>
</evidence>
<evidence type="ECO:0000255" key="3"/>
<evidence type="ECO:0000255" key="4">
    <source>
        <dbReference type="PROSITE-ProRule" id="PRU01057"/>
    </source>
</evidence>
<evidence type="ECO:0000256" key="5">
    <source>
        <dbReference type="SAM" id="MobiDB-lite"/>
    </source>
</evidence>
<evidence type="ECO:0000269" key="6">
    <source>
    </source>
</evidence>
<evidence type="ECO:0000269" key="7">
    <source>
    </source>
</evidence>
<evidence type="ECO:0000269" key="8">
    <source>
    </source>
</evidence>
<evidence type="ECO:0000269" key="9">
    <source>
    </source>
</evidence>
<evidence type="ECO:0000269" key="10">
    <source>
    </source>
</evidence>
<evidence type="ECO:0000269" key="11">
    <source>
    </source>
</evidence>
<evidence type="ECO:0000269" key="12">
    <source>
    </source>
</evidence>
<evidence type="ECO:0000269" key="13">
    <source>
    </source>
</evidence>
<evidence type="ECO:0000269" key="14">
    <source>
    </source>
</evidence>
<evidence type="ECO:0000269" key="15">
    <source>
    </source>
</evidence>
<evidence type="ECO:0000269" key="16">
    <source>
    </source>
</evidence>
<evidence type="ECO:0000303" key="17">
    <source>
    </source>
</evidence>
<evidence type="ECO:0000303" key="18">
    <source>
    </source>
</evidence>
<evidence type="ECO:0000303" key="19">
    <source>
    </source>
</evidence>
<evidence type="ECO:0000303" key="20">
    <source>
    </source>
</evidence>
<evidence type="ECO:0000303" key="21">
    <source>
    </source>
</evidence>
<evidence type="ECO:0000305" key="22"/>
<evidence type="ECO:0000312" key="23">
    <source>
        <dbReference type="Araport" id="AT4G02510"/>
    </source>
</evidence>
<evidence type="ECO:0000312" key="24">
    <source>
        <dbReference type="EMBL" id="AAC19285.1"/>
    </source>
</evidence>
<evidence type="ECO:0000312" key="25">
    <source>
        <dbReference type="EMBL" id="AAC78265.2"/>
    </source>
</evidence>
<evidence type="ECO:0007744" key="26">
    <source>
    </source>
</evidence>
<evidence type="ECO:0007744" key="27">
    <source>
    </source>
</evidence>
<evidence type="ECO:0007744" key="28">
    <source>
    </source>
</evidence>
<reference key="1">
    <citation type="journal article" date="1999" name="Nature">
        <title>Sequence and analysis of chromosome 4 of the plant Arabidopsis thaliana.</title>
        <authorList>
            <person name="Mayer K.F.X."/>
            <person name="Schueller C."/>
            <person name="Wambutt R."/>
            <person name="Murphy G."/>
            <person name="Volckaert G."/>
            <person name="Pohl T."/>
            <person name="Duesterhoeft A."/>
            <person name="Stiekema W."/>
            <person name="Entian K.-D."/>
            <person name="Terryn N."/>
            <person name="Harris B."/>
            <person name="Ansorge W."/>
            <person name="Brandt P."/>
            <person name="Grivell L.A."/>
            <person name="Rieger M."/>
            <person name="Weichselgartner M."/>
            <person name="de Simone V."/>
            <person name="Obermaier B."/>
            <person name="Mache R."/>
            <person name="Mueller M."/>
            <person name="Kreis M."/>
            <person name="Delseny M."/>
            <person name="Puigdomenech P."/>
            <person name="Watson M."/>
            <person name="Schmidtheini T."/>
            <person name="Reichert B."/>
            <person name="Portetelle D."/>
            <person name="Perez-Alonso M."/>
            <person name="Boutry M."/>
            <person name="Bancroft I."/>
            <person name="Vos P."/>
            <person name="Hoheisel J."/>
            <person name="Zimmermann W."/>
            <person name="Wedler H."/>
            <person name="Ridley P."/>
            <person name="Langham S.-A."/>
            <person name="McCullagh B."/>
            <person name="Bilham L."/>
            <person name="Robben J."/>
            <person name="van der Schueren J."/>
            <person name="Grymonprez B."/>
            <person name="Chuang Y.-J."/>
            <person name="Vandenbussche F."/>
            <person name="Braeken M."/>
            <person name="Weltjens I."/>
            <person name="Voet M."/>
            <person name="Bastiaens I."/>
            <person name="Aert R."/>
            <person name="Defoor E."/>
            <person name="Weitzenegger T."/>
            <person name="Bothe G."/>
            <person name="Ramsperger U."/>
            <person name="Hilbert H."/>
            <person name="Braun M."/>
            <person name="Holzer E."/>
            <person name="Brandt A."/>
            <person name="Peters S."/>
            <person name="van Staveren M."/>
            <person name="Dirkse W."/>
            <person name="Mooijman P."/>
            <person name="Klein Lankhorst R."/>
            <person name="Rose M."/>
            <person name="Hauf J."/>
            <person name="Koetter P."/>
            <person name="Berneiser S."/>
            <person name="Hempel S."/>
            <person name="Feldpausch M."/>
            <person name="Lamberth S."/>
            <person name="Van den Daele H."/>
            <person name="De Keyser A."/>
            <person name="Buysshaert C."/>
            <person name="Gielen J."/>
            <person name="Villarroel R."/>
            <person name="De Clercq R."/>
            <person name="van Montagu M."/>
            <person name="Rogers J."/>
            <person name="Cronin A."/>
            <person name="Quail M.A."/>
            <person name="Bray-Allen S."/>
            <person name="Clark L."/>
            <person name="Doggett J."/>
            <person name="Hall S."/>
            <person name="Kay M."/>
            <person name="Lennard N."/>
            <person name="McLay K."/>
            <person name="Mayes R."/>
            <person name="Pettett A."/>
            <person name="Rajandream M.A."/>
            <person name="Lyne M."/>
            <person name="Benes V."/>
            <person name="Rechmann S."/>
            <person name="Borkova D."/>
            <person name="Bloecker H."/>
            <person name="Scharfe M."/>
            <person name="Grimm M."/>
            <person name="Loehnert T.-H."/>
            <person name="Dose S."/>
            <person name="de Haan M."/>
            <person name="Maarse A.C."/>
            <person name="Schaefer M."/>
            <person name="Mueller-Auer S."/>
            <person name="Gabel C."/>
            <person name="Fuchs M."/>
            <person name="Fartmann B."/>
            <person name="Granderath K."/>
            <person name="Dauner D."/>
            <person name="Herzl A."/>
            <person name="Neumann S."/>
            <person name="Argiriou A."/>
            <person name="Vitale D."/>
            <person name="Liguori R."/>
            <person name="Piravandi E."/>
            <person name="Massenet O."/>
            <person name="Quigley F."/>
            <person name="Clabauld G."/>
            <person name="Muendlein A."/>
            <person name="Felber R."/>
            <person name="Schnabl S."/>
            <person name="Hiller R."/>
            <person name="Schmidt W."/>
            <person name="Lecharny A."/>
            <person name="Aubourg S."/>
            <person name="Chefdor F."/>
            <person name="Cooke R."/>
            <person name="Berger C."/>
            <person name="Monfort A."/>
            <person name="Casacuberta E."/>
            <person name="Gibbons T."/>
            <person name="Weber N."/>
            <person name="Vandenbol M."/>
            <person name="Bargues M."/>
            <person name="Terol J."/>
            <person name="Torres A."/>
            <person name="Perez-Perez A."/>
            <person name="Purnelle B."/>
            <person name="Bent E."/>
            <person name="Johnson S."/>
            <person name="Tacon D."/>
            <person name="Jesse T."/>
            <person name="Heijnen L."/>
            <person name="Schwarz S."/>
            <person name="Scholler P."/>
            <person name="Heber S."/>
            <person name="Francs P."/>
            <person name="Bielke C."/>
            <person name="Frishman D."/>
            <person name="Haase D."/>
            <person name="Lemcke K."/>
            <person name="Mewes H.-W."/>
            <person name="Stocker S."/>
            <person name="Zaccaria P."/>
            <person name="Bevan M."/>
            <person name="Wilson R.K."/>
            <person name="de la Bastide M."/>
            <person name="Habermann K."/>
            <person name="Parnell L."/>
            <person name="Dedhia N."/>
            <person name="Gnoj L."/>
            <person name="Schutz K."/>
            <person name="Huang E."/>
            <person name="Spiegel L."/>
            <person name="Sekhon M."/>
            <person name="Murray J."/>
            <person name="Sheet P."/>
            <person name="Cordes M."/>
            <person name="Abu-Threideh J."/>
            <person name="Stoneking T."/>
            <person name="Kalicki J."/>
            <person name="Graves T."/>
            <person name="Harmon G."/>
            <person name="Edwards J."/>
            <person name="Latreille P."/>
            <person name="Courtney L."/>
            <person name="Cloud J."/>
            <person name="Abbott A."/>
            <person name="Scott K."/>
            <person name="Johnson D."/>
            <person name="Minx P."/>
            <person name="Bentley D."/>
            <person name="Fulton B."/>
            <person name="Miller N."/>
            <person name="Greco T."/>
            <person name="Kemp K."/>
            <person name="Kramer J."/>
            <person name="Fulton L."/>
            <person name="Mardis E."/>
            <person name="Dante M."/>
            <person name="Pepin K."/>
            <person name="Hillier L.W."/>
            <person name="Nelson J."/>
            <person name="Spieth J."/>
            <person name="Ryan E."/>
            <person name="Andrews S."/>
            <person name="Geisel C."/>
            <person name="Layman D."/>
            <person name="Du H."/>
            <person name="Ali J."/>
            <person name="Berghoff A."/>
            <person name="Jones K."/>
            <person name="Drone K."/>
            <person name="Cotton M."/>
            <person name="Joshu C."/>
            <person name="Antonoiu B."/>
            <person name="Zidanic M."/>
            <person name="Strong C."/>
            <person name="Sun H."/>
            <person name="Lamar B."/>
            <person name="Yordan C."/>
            <person name="Ma P."/>
            <person name="Zhong J."/>
            <person name="Preston R."/>
            <person name="Vil D."/>
            <person name="Shekher M."/>
            <person name="Matero A."/>
            <person name="Shah R."/>
            <person name="Swaby I.K."/>
            <person name="O'Shaughnessy A."/>
            <person name="Rodriguez M."/>
            <person name="Hoffman J."/>
            <person name="Till S."/>
            <person name="Granat S."/>
            <person name="Shohdy N."/>
            <person name="Hasegawa A."/>
            <person name="Hameed A."/>
            <person name="Lodhi M."/>
            <person name="Johnson A."/>
            <person name="Chen E."/>
            <person name="Marra M.A."/>
            <person name="Martienssen R."/>
            <person name="McCombie W.R."/>
        </authorList>
    </citation>
    <scope>NUCLEOTIDE SEQUENCE [LARGE SCALE GENOMIC DNA]</scope>
    <source>
        <strain>cv. Columbia</strain>
    </source>
</reference>
<reference key="2">
    <citation type="journal article" date="2017" name="Plant J.">
        <title>Araport11: a complete reannotation of the Arabidopsis thaliana reference genome.</title>
        <authorList>
            <person name="Cheng C.Y."/>
            <person name="Krishnakumar V."/>
            <person name="Chan A.P."/>
            <person name="Thibaud-Nissen F."/>
            <person name="Schobel S."/>
            <person name="Town C.D."/>
        </authorList>
    </citation>
    <scope>GENOME REANNOTATION</scope>
    <source>
        <strain>cv. Columbia</strain>
    </source>
</reference>
<reference key="3">
    <citation type="journal article" date="2003" name="Science">
        <title>Empirical analysis of transcriptional activity in the Arabidopsis genome.</title>
        <authorList>
            <person name="Yamada K."/>
            <person name="Lim J."/>
            <person name="Dale J.M."/>
            <person name="Chen H."/>
            <person name="Shinn P."/>
            <person name="Palm C.J."/>
            <person name="Southwick A.M."/>
            <person name="Wu H.C."/>
            <person name="Kim C.J."/>
            <person name="Nguyen M."/>
            <person name="Pham P.K."/>
            <person name="Cheuk R.F."/>
            <person name="Karlin-Newmann G."/>
            <person name="Liu S.X."/>
            <person name="Lam B."/>
            <person name="Sakano H."/>
            <person name="Wu T."/>
            <person name="Yu G."/>
            <person name="Miranda M."/>
            <person name="Quach H.L."/>
            <person name="Tripp M."/>
            <person name="Chang C.H."/>
            <person name="Lee J.M."/>
            <person name="Toriumi M.J."/>
            <person name="Chan M.M."/>
            <person name="Tang C.C."/>
            <person name="Onodera C.S."/>
            <person name="Deng J.M."/>
            <person name="Akiyama K."/>
            <person name="Ansari Y."/>
            <person name="Arakawa T."/>
            <person name="Banh J."/>
            <person name="Banno F."/>
            <person name="Bowser L."/>
            <person name="Brooks S.Y."/>
            <person name="Carninci P."/>
            <person name="Chao Q."/>
            <person name="Choy N."/>
            <person name="Enju A."/>
            <person name="Goldsmith A.D."/>
            <person name="Gurjal M."/>
            <person name="Hansen N.F."/>
            <person name="Hayashizaki Y."/>
            <person name="Johnson-Hopson C."/>
            <person name="Hsuan V.W."/>
            <person name="Iida K."/>
            <person name="Karnes M."/>
            <person name="Khan S."/>
            <person name="Koesema E."/>
            <person name="Ishida J."/>
            <person name="Jiang P.X."/>
            <person name="Jones T."/>
            <person name="Kawai J."/>
            <person name="Kamiya A."/>
            <person name="Meyers C."/>
            <person name="Nakajima M."/>
            <person name="Narusaka M."/>
            <person name="Seki M."/>
            <person name="Sakurai T."/>
            <person name="Satou M."/>
            <person name="Tamse R."/>
            <person name="Vaysberg M."/>
            <person name="Wallender E.K."/>
            <person name="Wong C."/>
            <person name="Yamamura Y."/>
            <person name="Yuan S."/>
            <person name="Shinozaki K."/>
            <person name="Davis R.W."/>
            <person name="Theologis A."/>
            <person name="Ecker J.R."/>
        </authorList>
    </citation>
    <scope>NUCLEOTIDE SEQUENCE [LARGE SCALE MRNA] OF 1004-1503</scope>
    <source>
        <strain>cv. Columbia</strain>
    </source>
</reference>
<reference key="4">
    <citation type="submission" date="2005-03" db="EMBL/GenBank/DDBJ databases">
        <title>Large-scale analysis of RIKEN Arabidopsis full-length (RAFL) cDNAs.</title>
        <authorList>
            <person name="Totoki Y."/>
            <person name="Seki M."/>
            <person name="Ishida J."/>
            <person name="Nakajima M."/>
            <person name="Enju A."/>
            <person name="Kamiya A."/>
            <person name="Narusaka M."/>
            <person name="Shin-i T."/>
            <person name="Nakagawa M."/>
            <person name="Sakamoto N."/>
            <person name="Oishi K."/>
            <person name="Kohara Y."/>
            <person name="Kobayashi M."/>
            <person name="Toyoda A."/>
            <person name="Sakaki Y."/>
            <person name="Sakurai T."/>
            <person name="Iida K."/>
            <person name="Akiyama K."/>
            <person name="Satou M."/>
            <person name="Toyoda T."/>
            <person name="Konagaya A."/>
            <person name="Carninci P."/>
            <person name="Kawai J."/>
            <person name="Hayashizaki Y."/>
            <person name="Shinozaki K."/>
        </authorList>
    </citation>
    <scope>NUCLEOTIDE SEQUENCE [LARGE SCALE MRNA] OF 815-1503</scope>
    <source>
        <strain>cv. Columbia</strain>
    </source>
</reference>
<reference key="5">
    <citation type="journal article" date="2000" name="Nature">
        <title>The major protein import receptor of plastids is essential for chloroplast biogenesis.</title>
        <authorList>
            <person name="Bauer J."/>
            <person name="Chen K."/>
            <person name="Hiltbunner A."/>
            <person name="Wehrli E."/>
            <person name="Eugster M."/>
            <person name="Schnell D."/>
            <person name="Kessler F."/>
        </authorList>
    </citation>
    <scope>FUNCTION</scope>
    <scope>INTERACTION WITH THE TOC COMPLEX</scope>
    <scope>INDUCTION BY LIGHT</scope>
</reference>
<reference key="6">
    <citation type="journal article" date="2002" name="J. Cell Biol.">
        <title>The targeting of the atToc159 preprotein receptor to the chloroplast outer membrane is mediated by its GTPase domain and is regulated by GTP.</title>
        <authorList>
            <person name="Smith M.D."/>
            <person name="Hiltbrunner A."/>
            <person name="Kessler F."/>
            <person name="Schnell D.J."/>
        </authorList>
    </citation>
    <scope>INTERACTION WITH TOC33</scope>
    <scope>MUTAGENESIS OF ALA-864 AND LYS-868</scope>
    <scope>SUBCELLULAR LOCATION</scope>
</reference>
<reference key="7">
    <citation type="journal article" date="2003" name="J. Biol. Chem.">
        <title>Dimerization of Toc-GTPases at the chloroplast protein import machinery.</title>
        <authorList>
            <person name="Weibel P."/>
            <person name="Hiltbrunner A."/>
            <person name="Brand L."/>
            <person name="Kessler F."/>
        </authorList>
    </citation>
    <scope>FUNCTION</scope>
    <scope>DIMERIZATION WITH TOC33</scope>
</reference>
<reference key="8">
    <citation type="journal article" date="2003" name="J. Biol. Chem.">
        <title>The roles of Toc34 and Toc75 in targeting the Toc159 preprotein receptor to chloroplasts.</title>
        <authorList>
            <person name="Wallas T.R."/>
            <person name="Smith M.D."/>
            <person name="Sanchez-Nieto S."/>
            <person name="Schnell D.J."/>
        </authorList>
    </citation>
    <scope>FUNCTION</scope>
    <scope>MUTAGENESIS OF LYS-868</scope>
    <scope>SUBCELLULAR LOCATION</scope>
    <scope>INTERACTION WITH TOC33</scope>
</reference>
<reference key="9">
    <citation type="journal article" date="2003" name="Mol. Cell. Proteomics">
        <title>Proteomics of the chloroplast envelope membranes from Arabidopsis thaliana.</title>
        <authorList>
            <person name="Ferro M."/>
            <person name="Salvi D."/>
            <person name="Brugiere S."/>
            <person name="Miras S."/>
            <person name="Kowalski S."/>
            <person name="Louwagie M."/>
            <person name="Garin J."/>
            <person name="Joyard J."/>
            <person name="Rolland N."/>
        </authorList>
    </citation>
    <scope>IDENTIFICATION BY MASS SPECTROMETRY</scope>
    <scope>SUBCELLULAR LOCATION [LARGE SCALE ANALYSIS]</scope>
    <source>
        <strain>cv. Wassilewskija</strain>
    </source>
</reference>
<reference key="10">
    <citation type="journal article" date="2004" name="Plant Cell">
        <title>Functional specialization amongst the Arabidopsis Toc159 family of chloroplast protein import receptors.</title>
        <authorList>
            <person name="Kubis S."/>
            <person name="Patel R."/>
            <person name="Combe J."/>
            <person name="Bedard J."/>
            <person name="Kovacheva S."/>
            <person name="Lilley K."/>
            <person name="Biehl A."/>
            <person name="Leister D."/>
            <person name="Rios G."/>
            <person name="Koncz C."/>
            <person name="Jarvis P."/>
        </authorList>
    </citation>
    <scope>FUNCTION</scope>
    <scope>TISSUE SPECIFICITY</scope>
</reference>
<reference key="11">
    <citation type="journal article" date="2004" name="Plant Mol. Biol.">
        <title>AtToc90, a new GTP-binding component of the Arabidopsis chloroplast protein import machinery.</title>
        <authorList>
            <person name="Hiltbrunner A."/>
            <person name="Gruenig K."/>
            <person name="Alvarez-Huerta M."/>
            <person name="Infanger S."/>
            <person name="Bauer J."/>
            <person name="Kessler F."/>
        </authorList>
    </citation>
    <scope>FUNCTION</scope>
    <scope>INDUCTION BY LIGHT</scope>
    <scope>SUBCELLULAR LOCATION</scope>
    <source>
        <strain>cv. Columbia</strain>
    </source>
</reference>
<reference key="12">
    <citation type="journal article" date="2006" name="Plant Biol.">
        <title>Deletion of core components of the plastid protein import machinery causes differential arrest of embryo development in Arabidopsis thaliana.</title>
        <authorList>
            <person name="Hust B."/>
            <person name="Gutensohn M."/>
        </authorList>
    </citation>
    <scope>FUNCTION</scope>
</reference>
<reference key="13">
    <citation type="journal article" date="2007" name="J. Biol. Chem.">
        <title>In vitro comparative kinetic analysis of the chloroplast Toc GTPases.</title>
        <authorList>
            <person name="Reddick L.E."/>
            <person name="Vaughn M.D."/>
            <person name="Wright S.J."/>
            <person name="Campbell I.M."/>
            <person name="Bruce B.D."/>
        </authorList>
    </citation>
    <scope>BIOPHYSICOCHEMICAL PROPERTIES</scope>
</reference>
<reference key="14">
    <citation type="journal article" date="2008" name="J. Proteome Res.">
        <title>Site-specific phosphorylation profiling of Arabidopsis proteins by mass spectrometry and peptide chip analysis.</title>
        <authorList>
            <person name="de la Fuente van Bentem S."/>
            <person name="Anrather D."/>
            <person name="Dohnal I."/>
            <person name="Roitinger E."/>
            <person name="Csaszar E."/>
            <person name="Joore J."/>
            <person name="Buijnink J."/>
            <person name="Carreri A."/>
            <person name="Forzani C."/>
            <person name="Lorkovic Z.J."/>
            <person name="Barta A."/>
            <person name="Lecourieux D."/>
            <person name="Verhounig A."/>
            <person name="Jonak C."/>
            <person name="Hirt H."/>
        </authorList>
    </citation>
    <scope>PHOSPHORYLATION [LARGE SCALE ANALYSIS] AT SER-71</scope>
    <scope>IDENTIFICATION BY MASS SPECTROMETRY [LARGE SCALE ANALYSIS]</scope>
    <source>
        <tissue>Root</tissue>
    </source>
</reference>
<reference key="15">
    <citation type="journal article" date="2009" name="J. Proteomics">
        <title>Phosphoproteomic analysis of nuclei-enriched fractions from Arabidopsis thaliana.</title>
        <authorList>
            <person name="Jones A.M.E."/>
            <person name="MacLean D."/>
            <person name="Studholme D.J."/>
            <person name="Serna-Sanz A."/>
            <person name="Andreasson E."/>
            <person name="Rathjen J.P."/>
            <person name="Peck S.C."/>
        </authorList>
    </citation>
    <scope>PHOSPHORYLATION [LARGE SCALE ANALYSIS] AT SER-589 AND SER-665</scope>
    <scope>IDENTIFICATION BY MASS SPECTROMETRY [LARGE SCALE ANALYSIS]</scope>
    <source>
        <strain>cv. Columbia</strain>
    </source>
</reference>
<reference key="16">
    <citation type="journal article" date="2009" name="Plant Physiol.">
        <title>Large-scale Arabidopsis phosphoproteome profiling reveals novel chloroplast kinase substrates and phosphorylation networks.</title>
        <authorList>
            <person name="Reiland S."/>
            <person name="Messerli G."/>
            <person name="Baerenfaller K."/>
            <person name="Gerrits B."/>
            <person name="Endler A."/>
            <person name="Grossmann J."/>
            <person name="Gruissem W."/>
            <person name="Baginsky S."/>
        </authorList>
    </citation>
    <scope>PHOSPHORYLATION [LARGE SCALE ANALYSIS] AT SER-71; SER-210; SER-281; SER-288; SER-448; SER-589; SER-609; SER-630 AND SER-632</scope>
    <scope>IDENTIFICATION BY MASS SPECTROMETRY [LARGE SCALE ANALYSIS]</scope>
</reference>
<reference key="17">
    <citation type="journal article" date="2012" name="Science">
        <title>Chloroplast biogenesis is regulated by direct action of the ubiquitin-proteasome system.</title>
        <authorList>
            <person name="Ling Q."/>
            <person name="Huang W."/>
            <person name="Baldwin A."/>
            <person name="Jarvis P."/>
        </authorList>
    </citation>
    <scope>INTERACTION WITH SP1</scope>
</reference>
<reference key="18">
    <citation type="journal article" date="2017" name="J. Biol. Chem.">
        <title>The novel chloroplast outer membrane kinase KOC1 is a required component of the plastid protein import machinery.</title>
        <authorList>
            <person name="Zufferey M."/>
            <person name="Montandon C."/>
            <person name="Douet V."/>
            <person name="Demarsy E."/>
            <person name="Agne B."/>
            <person name="Baginsky S."/>
            <person name="Kessler F."/>
        </authorList>
    </citation>
    <scope>PHOSPHORYLATION BY KOC1</scope>
    <source>
        <strain>cv. Columbia</strain>
    </source>
</reference>
<comment type="function">
    <text evidence="6 9 10 11 12 13">GTPase involved in protein precursor import into chloroplasts. Seems to recognize chloroplast-destined precursor proteins and regulate their presentation to the translocation channel through GTP hydrolysis. Required for chloroplast biogenesis. Probably specialized in the import of nuclear encoded photosynthetic preproteins from the cytoplasm to the chloroplast.</text>
</comment>
<comment type="cofactor">
    <cofactor evidence="1">
        <name>Mg(2+)</name>
        <dbReference type="ChEBI" id="CHEBI:18420"/>
    </cofactor>
    <text evidence="1">Binds 1 Mg(2+) ion by subunit.</text>
</comment>
<comment type="biophysicochemical properties">
    <kinetics>
        <KM evidence="14">21.2 uM for GTP (at pH 7.6 and 25 degrees Celsius)</KM>
    </kinetics>
</comment>
<comment type="subunit">
    <text evidence="6 7 10 15">Homodimer and heterodimer with TOC33. Part of the TOC core complex that includes 1 protein for the specific recognition of transit peptides surrounded by a ring composed of four proteins forming translocation channels, and four to five GTP-binding proteins providing energy. This core complex can interact with components of the TIC complex to form a larger import complex. Chloroplastic protein precursor such as prSS (precursor of the RuBisCO small subunit) interacts with these complexes. The TOC complex contains a specific subset of polar lipids such as digalactosyldiacylglyceride (DGDG), phosphatidylcholine (PC) and phosphatidylglycerol (PG) (PubMed:10646606, PubMed:12473690, PubMed:12951325). Interacts with SP1 (PubMed:23118188).</text>
</comment>
<comment type="interaction">
    <interactant intactId="EBI-639063">
        <id>O81283</id>
    </interactant>
    <interactant intactId="EBI-6559199">
        <id>Q8L7N4</id>
        <label>SP1</label>
    </interactant>
    <organismsDiffer>false</organismsDiffer>
    <experiments>2</experiments>
</comment>
<comment type="interaction">
    <interactant intactId="EBI-639063">
        <id>O81283</id>
    </interactant>
    <interactant intactId="EBI-1766808">
        <id>Q38906</id>
        <label>TOC34</label>
    </interactant>
    <organismsDiffer>false</organismsDiffer>
    <experiments>5</experiments>
</comment>
<comment type="interaction">
    <interactant intactId="EBI-639063">
        <id>O81283</id>
    </interactant>
    <interactant intactId="EBI-1766821">
        <id>P69249</id>
        <label>RBCS</label>
    </interactant>
    <organismsDiffer>true</organismsDiffer>
    <experiments>5</experiments>
</comment>
<comment type="subcellular location">
    <subcellularLocation>
        <location evidence="7 8 10 12">Plastid</location>
        <location evidence="7 8 10 12">Chloroplast outer membrane</location>
        <topology evidence="3">Single-pass membrane protein</topology>
    </subcellularLocation>
    <subcellularLocation>
        <location evidence="7 10">Cytoplasm</location>
    </subcellularLocation>
    <text evidence="7 10">Cycles between the cytoplasm and chloroplast, probably as a soluble preprotein receptor. The anchoring to the chloroplast outer membrane required the GTPase activity and GDP, and is dependent of interactions with TOC33 as well as TOC34 and TOC75. May contain beta barrel transmembrane regions.</text>
</comment>
<comment type="developmental stage">
    <text>Mostly expressed in seedlings, and, to a lower extent, in leaves and flowers.</text>
</comment>
<comment type="induction">
    <text evidence="6 12">By light conditions.</text>
</comment>
<comment type="PTM">
    <text evidence="16">Phosphorylated by KOC1.</text>
</comment>
<comment type="similarity">
    <text evidence="22">Belongs to the TRAFAC class TrmE-Era-EngA-EngB-Septin-like GTPase superfamily. AIG1/Toc34/Toc159-like paraseptin GTPase family. TOC159 subfamily.</text>
</comment>
<comment type="sequence caution" evidence="22">
    <conflict type="erroneous gene model prediction">
        <sequence resource="EMBL-CDS" id="AAC78265"/>
    </conflict>
</comment>
<comment type="sequence caution" evidence="22">
    <conflict type="erroneous initiation">
        <sequence resource="EMBL-CDS" id="AAL06516"/>
    </conflict>
    <text>Truncated N-terminus.</text>
</comment>
<comment type="sequence caution" evidence="22">
    <conflict type="erroneous gene model prediction">
        <sequence resource="EMBL-CDS" id="CAB80744"/>
    </conflict>
</comment>